<organism>
    <name type="scientific">Vibrio campbellii (strain ATCC BAA-1116)</name>
    <dbReference type="NCBI Taxonomy" id="2902295"/>
    <lineage>
        <taxon>Bacteria</taxon>
        <taxon>Pseudomonadati</taxon>
        <taxon>Pseudomonadota</taxon>
        <taxon>Gammaproteobacteria</taxon>
        <taxon>Vibrionales</taxon>
        <taxon>Vibrionaceae</taxon>
        <taxon>Vibrio</taxon>
    </lineage>
</organism>
<proteinExistence type="inferred from homology"/>
<feature type="chain" id="PRO_1000120450" description="GMP synthase [glutamine-hydrolyzing]">
    <location>
        <begin position="1"/>
        <end position="517"/>
    </location>
</feature>
<feature type="domain" description="Glutamine amidotransferase type-1" evidence="1">
    <location>
        <begin position="9"/>
        <end position="199"/>
    </location>
</feature>
<feature type="domain" description="GMPS ATP-PPase" evidence="1">
    <location>
        <begin position="200"/>
        <end position="392"/>
    </location>
</feature>
<feature type="active site" description="Nucleophile" evidence="1">
    <location>
        <position position="86"/>
    </location>
</feature>
<feature type="active site" evidence="1">
    <location>
        <position position="173"/>
    </location>
</feature>
<feature type="active site" evidence="1">
    <location>
        <position position="175"/>
    </location>
</feature>
<feature type="binding site" evidence="1">
    <location>
        <begin position="227"/>
        <end position="233"/>
    </location>
    <ligand>
        <name>ATP</name>
        <dbReference type="ChEBI" id="CHEBI:30616"/>
    </ligand>
</feature>
<comment type="function">
    <text evidence="1">Catalyzes the synthesis of GMP from XMP.</text>
</comment>
<comment type="catalytic activity">
    <reaction evidence="1">
        <text>XMP + L-glutamine + ATP + H2O = GMP + L-glutamate + AMP + diphosphate + 2 H(+)</text>
        <dbReference type="Rhea" id="RHEA:11680"/>
        <dbReference type="ChEBI" id="CHEBI:15377"/>
        <dbReference type="ChEBI" id="CHEBI:15378"/>
        <dbReference type="ChEBI" id="CHEBI:29985"/>
        <dbReference type="ChEBI" id="CHEBI:30616"/>
        <dbReference type="ChEBI" id="CHEBI:33019"/>
        <dbReference type="ChEBI" id="CHEBI:57464"/>
        <dbReference type="ChEBI" id="CHEBI:58115"/>
        <dbReference type="ChEBI" id="CHEBI:58359"/>
        <dbReference type="ChEBI" id="CHEBI:456215"/>
        <dbReference type="EC" id="6.3.5.2"/>
    </reaction>
</comment>
<comment type="pathway">
    <text evidence="1">Purine metabolism; GMP biosynthesis; GMP from XMP (L-Gln route): step 1/1.</text>
</comment>
<comment type="subunit">
    <text evidence="1">Homodimer.</text>
</comment>
<dbReference type="EC" id="6.3.5.2" evidence="1"/>
<dbReference type="EMBL" id="CP000789">
    <property type="protein sequence ID" value="ABU70070.1"/>
    <property type="molecule type" value="Genomic_DNA"/>
</dbReference>
<dbReference type="RefSeq" id="WP_005424749.1">
    <property type="nucleotide sequence ID" value="NC_022269.1"/>
</dbReference>
<dbReference type="SMR" id="A7MU26"/>
<dbReference type="MEROPS" id="C26.957"/>
<dbReference type="KEGG" id="vha:VIBHAR_01077"/>
<dbReference type="PATRIC" id="fig|338187.25.peg.1550"/>
<dbReference type="UniPathway" id="UPA00189">
    <property type="reaction ID" value="UER00296"/>
</dbReference>
<dbReference type="Proteomes" id="UP000008152">
    <property type="component" value="Chromosome I"/>
</dbReference>
<dbReference type="GO" id="GO:0005829">
    <property type="term" value="C:cytosol"/>
    <property type="evidence" value="ECO:0007669"/>
    <property type="project" value="TreeGrafter"/>
</dbReference>
<dbReference type="GO" id="GO:0005524">
    <property type="term" value="F:ATP binding"/>
    <property type="evidence" value="ECO:0007669"/>
    <property type="project" value="UniProtKB-UniRule"/>
</dbReference>
<dbReference type="GO" id="GO:0003921">
    <property type="term" value="F:GMP synthase activity"/>
    <property type="evidence" value="ECO:0007669"/>
    <property type="project" value="InterPro"/>
</dbReference>
<dbReference type="CDD" id="cd01742">
    <property type="entry name" value="GATase1_GMP_Synthase"/>
    <property type="match status" value="1"/>
</dbReference>
<dbReference type="CDD" id="cd01997">
    <property type="entry name" value="GMP_synthase_C"/>
    <property type="match status" value="1"/>
</dbReference>
<dbReference type="FunFam" id="3.30.300.10:FF:000002">
    <property type="entry name" value="GMP synthase [glutamine-hydrolyzing]"/>
    <property type="match status" value="1"/>
</dbReference>
<dbReference type="FunFam" id="3.40.50.620:FF:000001">
    <property type="entry name" value="GMP synthase [glutamine-hydrolyzing]"/>
    <property type="match status" value="1"/>
</dbReference>
<dbReference type="FunFam" id="3.40.50.880:FF:000001">
    <property type="entry name" value="GMP synthase [glutamine-hydrolyzing]"/>
    <property type="match status" value="1"/>
</dbReference>
<dbReference type="Gene3D" id="3.30.300.10">
    <property type="match status" value="1"/>
</dbReference>
<dbReference type="Gene3D" id="3.40.50.880">
    <property type="match status" value="1"/>
</dbReference>
<dbReference type="Gene3D" id="3.40.50.620">
    <property type="entry name" value="HUPs"/>
    <property type="match status" value="1"/>
</dbReference>
<dbReference type="HAMAP" id="MF_00344">
    <property type="entry name" value="GMP_synthase"/>
    <property type="match status" value="1"/>
</dbReference>
<dbReference type="InterPro" id="IPR029062">
    <property type="entry name" value="Class_I_gatase-like"/>
</dbReference>
<dbReference type="InterPro" id="IPR017926">
    <property type="entry name" value="GATASE"/>
</dbReference>
<dbReference type="InterPro" id="IPR001674">
    <property type="entry name" value="GMP_synth_C"/>
</dbReference>
<dbReference type="InterPro" id="IPR004739">
    <property type="entry name" value="GMP_synth_GATase"/>
</dbReference>
<dbReference type="InterPro" id="IPR022955">
    <property type="entry name" value="GMP_synthase"/>
</dbReference>
<dbReference type="InterPro" id="IPR025777">
    <property type="entry name" value="GMPS_ATP_PPase_dom"/>
</dbReference>
<dbReference type="InterPro" id="IPR022310">
    <property type="entry name" value="NAD/GMP_synthase"/>
</dbReference>
<dbReference type="InterPro" id="IPR014729">
    <property type="entry name" value="Rossmann-like_a/b/a_fold"/>
</dbReference>
<dbReference type="NCBIfam" id="TIGR00884">
    <property type="entry name" value="guaA_Cterm"/>
    <property type="match status" value="1"/>
</dbReference>
<dbReference type="NCBIfam" id="TIGR00888">
    <property type="entry name" value="guaA_Nterm"/>
    <property type="match status" value="1"/>
</dbReference>
<dbReference type="NCBIfam" id="NF000848">
    <property type="entry name" value="PRK00074.1"/>
    <property type="match status" value="1"/>
</dbReference>
<dbReference type="PANTHER" id="PTHR11922:SF2">
    <property type="entry name" value="GMP SYNTHASE [GLUTAMINE-HYDROLYZING]"/>
    <property type="match status" value="1"/>
</dbReference>
<dbReference type="PANTHER" id="PTHR11922">
    <property type="entry name" value="GMP SYNTHASE-RELATED"/>
    <property type="match status" value="1"/>
</dbReference>
<dbReference type="Pfam" id="PF00117">
    <property type="entry name" value="GATase"/>
    <property type="match status" value="1"/>
</dbReference>
<dbReference type="Pfam" id="PF00958">
    <property type="entry name" value="GMP_synt_C"/>
    <property type="match status" value="1"/>
</dbReference>
<dbReference type="Pfam" id="PF02540">
    <property type="entry name" value="NAD_synthase"/>
    <property type="match status" value="1"/>
</dbReference>
<dbReference type="PRINTS" id="PR00097">
    <property type="entry name" value="ANTSNTHASEII"/>
</dbReference>
<dbReference type="PRINTS" id="PR00099">
    <property type="entry name" value="CPSGATASE"/>
</dbReference>
<dbReference type="PRINTS" id="PR00096">
    <property type="entry name" value="GATASE"/>
</dbReference>
<dbReference type="SUPFAM" id="SSF52402">
    <property type="entry name" value="Adenine nucleotide alpha hydrolases-like"/>
    <property type="match status" value="1"/>
</dbReference>
<dbReference type="SUPFAM" id="SSF52317">
    <property type="entry name" value="Class I glutamine amidotransferase-like"/>
    <property type="match status" value="1"/>
</dbReference>
<dbReference type="SUPFAM" id="SSF54810">
    <property type="entry name" value="GMP synthetase C-terminal dimerisation domain"/>
    <property type="match status" value="1"/>
</dbReference>
<dbReference type="PROSITE" id="PS51273">
    <property type="entry name" value="GATASE_TYPE_1"/>
    <property type="match status" value="1"/>
</dbReference>
<dbReference type="PROSITE" id="PS51553">
    <property type="entry name" value="GMPS_ATP_PPASE"/>
    <property type="match status" value="1"/>
</dbReference>
<reference key="1">
    <citation type="submission" date="2007-08" db="EMBL/GenBank/DDBJ databases">
        <authorList>
            <consortium name="The Vibrio harveyi Genome Sequencing Project"/>
            <person name="Bassler B."/>
            <person name="Clifton S.W."/>
            <person name="Fulton L."/>
            <person name="Delehaunty K."/>
            <person name="Fronick C."/>
            <person name="Harrison M."/>
            <person name="Markivic C."/>
            <person name="Fulton R."/>
            <person name="Tin-Wollam A.-M."/>
            <person name="Shah N."/>
            <person name="Pepin K."/>
            <person name="Nash W."/>
            <person name="Thiruvilangam P."/>
            <person name="Bhonagiri V."/>
            <person name="Waters C."/>
            <person name="Tu K.C."/>
            <person name="Irgon J."/>
            <person name="Wilson R.K."/>
        </authorList>
    </citation>
    <scope>NUCLEOTIDE SEQUENCE [LARGE SCALE GENOMIC DNA]</scope>
    <source>
        <strain>ATCC BAA-1116 / BB120</strain>
    </source>
</reference>
<keyword id="KW-0067">ATP-binding</keyword>
<keyword id="KW-0315">Glutamine amidotransferase</keyword>
<keyword id="KW-0332">GMP biosynthesis</keyword>
<keyword id="KW-0436">Ligase</keyword>
<keyword id="KW-0547">Nucleotide-binding</keyword>
<keyword id="KW-0658">Purine biosynthesis</keyword>
<accession>A7MU26</accession>
<sequence>MTKNIHDQRILILDFGSQYTQLVARRVREIGVYCELWSWDVEEADIREFNPDGIILSGGPESVTEDNSPRAPQYVFDSGVPVLGVCYGMQTMAEQLGGKVAGSTEREFGYAQVKVSGESALFKDLELTQDVWMSHGDKVVEIPADFVKVGETDTCPYAAMANEEKKYYGVQFHPEVTHTKGGLQMLENFVLGVCGCERLWTSESIIEDAVARIKEQVGDDEVILGLSGGVDSSVVAMLVHRAIGDKLTCVFVDNGLLRLNEGQQVMDMFGDQFGLNIIKVDAEDRFLKALEGKSDPEEKRKTIGHVFVDVFDEESKKLKNAKWLAQGTIYPDVIESAASKTGKAHVIKSHHNVGGLPDDMEMGLVEPLRELFKDEVRKIGLELGLPYNMLYRHPFPGPGLGVRVLGEIKKEYCDLLRRADAIFIEELHAADLYNKVSQAFTVFLPVRSVGVMGDGRKYDWVVSLRAVETIDFMTAHWAHLPYDFLGKVSNRIINEVDGISRVVYDISGKPPATIEWE</sequence>
<protein>
    <recommendedName>
        <fullName evidence="1">GMP synthase [glutamine-hydrolyzing]</fullName>
        <ecNumber evidence="1">6.3.5.2</ecNumber>
    </recommendedName>
    <alternativeName>
        <fullName evidence="1">GMP synthetase</fullName>
    </alternativeName>
    <alternativeName>
        <fullName evidence="1">Glutamine amidotransferase</fullName>
    </alternativeName>
</protein>
<evidence type="ECO:0000255" key="1">
    <source>
        <dbReference type="HAMAP-Rule" id="MF_00344"/>
    </source>
</evidence>
<gene>
    <name evidence="1" type="primary">guaA</name>
    <name type="ordered locus">VIBHAR_01077</name>
</gene>
<name>GUAA_VIBC1</name>